<accession>B8DB31</accession>
<keyword id="KW-0687">Ribonucleoprotein</keyword>
<keyword id="KW-0689">Ribosomal protein</keyword>
<proteinExistence type="inferred from homology"/>
<gene>
    <name evidence="1" type="primary">rpmJ</name>
    <name type="ordered locus">LMHCC_2925</name>
</gene>
<name>RL36_LISMH</name>
<dbReference type="EMBL" id="CP001175">
    <property type="protein sequence ID" value="ACK41256.1"/>
    <property type="molecule type" value="Genomic_DNA"/>
</dbReference>
<dbReference type="RefSeq" id="WP_003720928.1">
    <property type="nucleotide sequence ID" value="NC_011660.1"/>
</dbReference>
<dbReference type="SMR" id="B8DB31"/>
<dbReference type="GeneID" id="93240490"/>
<dbReference type="KEGG" id="lmh:LMHCC_2925"/>
<dbReference type="HOGENOM" id="CLU_135723_6_2_9"/>
<dbReference type="GO" id="GO:0005737">
    <property type="term" value="C:cytoplasm"/>
    <property type="evidence" value="ECO:0007669"/>
    <property type="project" value="UniProtKB-ARBA"/>
</dbReference>
<dbReference type="GO" id="GO:1990904">
    <property type="term" value="C:ribonucleoprotein complex"/>
    <property type="evidence" value="ECO:0007669"/>
    <property type="project" value="UniProtKB-KW"/>
</dbReference>
<dbReference type="GO" id="GO:0005840">
    <property type="term" value="C:ribosome"/>
    <property type="evidence" value="ECO:0007669"/>
    <property type="project" value="UniProtKB-KW"/>
</dbReference>
<dbReference type="GO" id="GO:0003735">
    <property type="term" value="F:structural constituent of ribosome"/>
    <property type="evidence" value="ECO:0007669"/>
    <property type="project" value="InterPro"/>
</dbReference>
<dbReference type="GO" id="GO:0006412">
    <property type="term" value="P:translation"/>
    <property type="evidence" value="ECO:0007669"/>
    <property type="project" value="UniProtKB-UniRule"/>
</dbReference>
<dbReference type="HAMAP" id="MF_00251">
    <property type="entry name" value="Ribosomal_bL36"/>
    <property type="match status" value="1"/>
</dbReference>
<dbReference type="InterPro" id="IPR000473">
    <property type="entry name" value="Ribosomal_bL36"/>
</dbReference>
<dbReference type="InterPro" id="IPR035977">
    <property type="entry name" value="Ribosomal_bL36_sp"/>
</dbReference>
<dbReference type="NCBIfam" id="TIGR01022">
    <property type="entry name" value="rpmJ_bact"/>
    <property type="match status" value="1"/>
</dbReference>
<dbReference type="PANTHER" id="PTHR42888">
    <property type="entry name" value="50S RIBOSOMAL PROTEIN L36, CHLOROPLASTIC"/>
    <property type="match status" value="1"/>
</dbReference>
<dbReference type="PANTHER" id="PTHR42888:SF1">
    <property type="entry name" value="LARGE RIBOSOMAL SUBUNIT PROTEIN BL36C"/>
    <property type="match status" value="1"/>
</dbReference>
<dbReference type="Pfam" id="PF00444">
    <property type="entry name" value="Ribosomal_L36"/>
    <property type="match status" value="1"/>
</dbReference>
<dbReference type="SUPFAM" id="SSF57840">
    <property type="entry name" value="Ribosomal protein L36"/>
    <property type="match status" value="1"/>
</dbReference>
<dbReference type="PROSITE" id="PS00828">
    <property type="entry name" value="RIBOSOMAL_L36"/>
    <property type="match status" value="1"/>
</dbReference>
<organism>
    <name type="scientific">Listeria monocytogenes serotype 4a (strain HCC23)</name>
    <dbReference type="NCBI Taxonomy" id="552536"/>
    <lineage>
        <taxon>Bacteria</taxon>
        <taxon>Bacillati</taxon>
        <taxon>Bacillota</taxon>
        <taxon>Bacilli</taxon>
        <taxon>Bacillales</taxon>
        <taxon>Listeriaceae</taxon>
        <taxon>Listeria</taxon>
    </lineage>
</organism>
<evidence type="ECO:0000255" key="1">
    <source>
        <dbReference type="HAMAP-Rule" id="MF_00251"/>
    </source>
</evidence>
<evidence type="ECO:0000305" key="2"/>
<reference key="1">
    <citation type="journal article" date="2011" name="J. Bacteriol.">
        <title>Genome sequence of lineage III Listeria monocytogenes strain HCC23.</title>
        <authorList>
            <person name="Steele C.L."/>
            <person name="Donaldson J.R."/>
            <person name="Paul D."/>
            <person name="Banes M.M."/>
            <person name="Arick T."/>
            <person name="Bridges S.M."/>
            <person name="Lawrence M.L."/>
        </authorList>
    </citation>
    <scope>NUCLEOTIDE SEQUENCE [LARGE SCALE GENOMIC DNA]</scope>
    <source>
        <strain>HCC23</strain>
    </source>
</reference>
<feature type="chain" id="PRO_1000196193" description="Large ribosomal subunit protein bL36">
    <location>
        <begin position="1"/>
        <end position="37"/>
    </location>
</feature>
<comment type="similarity">
    <text evidence="1">Belongs to the bacterial ribosomal protein bL36 family.</text>
</comment>
<protein>
    <recommendedName>
        <fullName evidence="1">Large ribosomal subunit protein bL36</fullName>
    </recommendedName>
    <alternativeName>
        <fullName evidence="2">50S ribosomal protein L36</fullName>
    </alternativeName>
</protein>
<sequence>MKVRPSVKPMCEKCKVIRRKGKVMVICENPKHKQKQG</sequence>